<dbReference type="EMBL" id="X17403">
    <property type="protein sequence ID" value="CAA35438.1"/>
    <property type="molecule type" value="Genomic_DNA"/>
</dbReference>
<dbReference type="EMBL" id="BK000394">
    <property type="protein sequence ID" value="DAA00154.1"/>
    <property type="molecule type" value="Genomic_DNA"/>
</dbReference>
<dbReference type="PIR" id="S09768">
    <property type="entry name" value="S09768"/>
</dbReference>
<dbReference type="Proteomes" id="UP000008991">
    <property type="component" value="Segment"/>
</dbReference>
<dbReference type="Proteomes" id="UP000008992">
    <property type="component" value="Segment"/>
</dbReference>
<dbReference type="GO" id="GO:0030430">
    <property type="term" value="C:host cell cytoplasm"/>
    <property type="evidence" value="ECO:0007669"/>
    <property type="project" value="UniProtKB-SubCell"/>
</dbReference>
<dbReference type="InterPro" id="IPR016497">
    <property type="entry name" value="Herpes_UL5"/>
</dbReference>
<dbReference type="PIRSF" id="PIRSF006846">
    <property type="entry name" value="UCP006846_UL5"/>
    <property type="match status" value="1"/>
</dbReference>
<accession>P16776</accession>
<accession>Q7M6N4</accession>
<protein>
    <recommendedName>
        <fullName>Protein UL5</fullName>
    </recommendedName>
</protein>
<keyword id="KW-1035">Host cytoplasm</keyword>
<keyword id="KW-0945">Host-virus interaction</keyword>
<keyword id="KW-1185">Reference proteome</keyword>
<organism>
    <name type="scientific">Human cytomegalovirus (strain AD169)</name>
    <name type="common">HHV-5</name>
    <name type="synonym">Human herpesvirus 5</name>
    <dbReference type="NCBI Taxonomy" id="10360"/>
    <lineage>
        <taxon>Viruses</taxon>
        <taxon>Duplodnaviria</taxon>
        <taxon>Heunggongvirae</taxon>
        <taxon>Peploviricota</taxon>
        <taxon>Herviviricetes</taxon>
        <taxon>Herpesvirales</taxon>
        <taxon>Orthoherpesviridae</taxon>
        <taxon>Betaherpesvirinae</taxon>
        <taxon>Cytomegalovirus</taxon>
        <taxon>Cytomegalovirus humanbeta5</taxon>
        <taxon>Human cytomegalovirus</taxon>
    </lineage>
</organism>
<organismHost>
    <name type="scientific">Homo sapiens</name>
    <name type="common">Human</name>
    <dbReference type="NCBI Taxonomy" id="9606"/>
</organismHost>
<name>UL05_HCMVA</name>
<sequence>MFLGYSDCVDPGLAVYRVSRSRLKLVLSFVWLVGLRLHDCAAFESCCYDITEAESNKAISRDKAAFTSSVSTRTPSLAIAPPPDRSMLLSREEELVPWSRLIITKQFYGGLIFHTTWVTGFVLLGLLTLFASLFRVPQSICRFCIDRLRDIARPLKYRYQRLVATV</sequence>
<evidence type="ECO:0000269" key="1">
    <source>
    </source>
</evidence>
<evidence type="ECO:0000305" key="2"/>
<reference key="1">
    <citation type="journal article" date="1990" name="Curr. Top. Microbiol. Immunol.">
        <title>Analysis of the protein-coding content of the sequence of human cytomegalovirus strain AD169.</title>
        <authorList>
            <person name="Chee M.S."/>
            <person name="Bankier A.T."/>
            <person name="Beck S."/>
            <person name="Bohni R."/>
            <person name="Brown C.M."/>
            <person name="Cerny R."/>
            <person name="Horsnell T."/>
            <person name="Hutchison C.A. III"/>
            <person name="Kouzarides T."/>
            <person name="Martignetti J.A."/>
            <person name="Preddie E."/>
            <person name="Satchwell S.C."/>
            <person name="Tomlinson P."/>
            <person name="Weston K.M."/>
            <person name="Barrell B.G."/>
        </authorList>
    </citation>
    <scope>NUCLEOTIDE SEQUENCE [LARGE SCALE GENOMIC DNA]</scope>
</reference>
<reference key="2">
    <citation type="journal article" date="2003" name="J. Gen. Virol.">
        <title>The human cytomegalovirus genome revisited: comparison with the chimpanzee cytomegalovirus genome.</title>
        <authorList>
            <person name="Davison A.J."/>
            <person name="Dolan A."/>
            <person name="Akter P."/>
            <person name="Addison C."/>
            <person name="Dargan D.J."/>
            <person name="Alcendor D.J."/>
            <person name="McGeoch D.J."/>
            <person name="Hayward G.S."/>
        </authorList>
    </citation>
    <scope>GENOME REANNOTATION</scope>
</reference>
<reference key="3">
    <citation type="journal article" date="2003" name="J. Gen. Virol.">
        <authorList>
            <person name="Davison A.J."/>
            <person name="Dolan A."/>
            <person name="Akter P."/>
            <person name="Addison C."/>
            <person name="Dargan D.J."/>
            <person name="Alcendor D.J."/>
            <person name="McGeoch D.J."/>
            <person name="Hayward G.S."/>
        </authorList>
    </citation>
    <scope>ERRATUM OF PUBMED:12533697</scope>
</reference>
<reference key="4">
    <citation type="journal article" date="2004" name="J. Virol.">
        <title>Identification of proteins in human cytomegalovirus (HCMV) particles: the HCMV proteome.</title>
        <authorList>
            <person name="Varnum S.M."/>
            <person name="Streblow D.N."/>
            <person name="Monroe M.E."/>
            <person name="Smith P."/>
            <person name="Auberry K.J."/>
            <person name="Pasa-Tolic L."/>
            <person name="Wang D."/>
            <person name="Camp D.G. II"/>
            <person name="Rodland K."/>
            <person name="Wiley S."/>
            <person name="Britt W."/>
            <person name="Shenk T."/>
            <person name="Smith R.D."/>
            <person name="Nelson J.A."/>
        </authorList>
    </citation>
    <scope>IDENTIFICATION</scope>
</reference>
<reference key="5">
    <citation type="journal article" date="2004" name="J. Virol.">
        <authorList>
            <person name="Varnum S.M."/>
            <person name="Streblow D.N."/>
            <person name="Monroe M.E."/>
            <person name="Smith P."/>
            <person name="Auberry K.J."/>
            <person name="Pasa-Tolic L."/>
            <person name="Wang D."/>
            <person name="Camp D.G. II"/>
            <person name="Rodland K."/>
            <person name="Wiley S."/>
            <person name="Britt W."/>
            <person name="Shenk T."/>
            <person name="Smith R.D."/>
            <person name="Nelson J.A."/>
        </authorList>
    </citation>
    <scope>ERRATUM OF PUBMED:15452216</scope>
</reference>
<reference key="6">
    <citation type="journal article" date="2020" name="Virology">
        <title>Characterization of pUL5, an HCMV protein interacting with the cellular protein IQGAP1.</title>
        <authorList>
            <person name="Anselmi G."/>
            <person name="Giuliani M."/>
            <person name="Vezzani G."/>
            <person name="Ferranti R."/>
            <person name="Gentile M."/>
            <person name="Cortese M."/>
            <person name="Amendola D."/>
            <person name="Pacchiani N."/>
            <person name="D'Aurizio R."/>
            <person name="Bruno L."/>
            <person name="Uematsu Y."/>
            <person name="Merola M."/>
            <person name="Maione D."/>
        </authorList>
    </citation>
    <scope>FUNCTION</scope>
    <scope>INTERACTION WITH HOST IQGAP1</scope>
    <scope>SUBCELLULAR LOCATION</scope>
</reference>
<gene>
    <name type="primary">UL5</name>
</gene>
<proteinExistence type="evidence at protein level"/>
<comment type="function">
    <text evidence="1">May play a role in rearrangement of cellular cytoskeleton towards an efficient viral assembly and spreading.</text>
</comment>
<comment type="subunit">
    <text evidence="1">Interacts with host IQGAP1.</text>
</comment>
<comment type="subcellular location">
    <subcellularLocation>
        <location evidence="1">Host cytoplasm</location>
    </subcellularLocation>
    <text evidence="1">Localizes within the assembly compartments within host cytoplasm, but is not incorporated in the virion.</text>
</comment>
<comment type="similarity">
    <text evidence="2">Belongs to the RL11 family.</text>
</comment>
<feature type="chain" id="PRO_0000115302" description="Protein UL5">
    <location>
        <begin position="1"/>
        <end position="166"/>
    </location>
</feature>